<gene>
    <name type="primary">mrps12</name>
    <name type="ORF">NCU06542</name>
</gene>
<sequence>MATTFLRNLFSQAQPSLLRRPLMPSSSSILPAAARLFSSTPAQNATLNQVMRGCRKPQRARHAVSPALSSIKSPALKGVCVKVGITRPKKPNSGERKTARVRLSTGKVITAYIPGEGHNISQHSVVLVRGGRAQDCPGVRYHLVRGALDLAGVATRMSSRSKYGTKKPKKASVG</sequence>
<name>RT12_NEUCR</name>
<organism>
    <name type="scientific">Neurospora crassa (strain ATCC 24698 / 74-OR23-1A / CBS 708.71 / DSM 1257 / FGSC 987)</name>
    <dbReference type="NCBI Taxonomy" id="367110"/>
    <lineage>
        <taxon>Eukaryota</taxon>
        <taxon>Fungi</taxon>
        <taxon>Dikarya</taxon>
        <taxon>Ascomycota</taxon>
        <taxon>Pezizomycotina</taxon>
        <taxon>Sordariomycetes</taxon>
        <taxon>Sordariomycetidae</taxon>
        <taxon>Sordariales</taxon>
        <taxon>Sordariaceae</taxon>
        <taxon>Neurospora</taxon>
    </lineage>
</organism>
<feature type="chain" id="PRO_0000458575" description="Small ribosomal subunit protein uS12m">
    <location>
        <begin position="1"/>
        <end position="174"/>
    </location>
</feature>
<dbReference type="EMBL" id="CM002239">
    <property type="protein sequence ID" value="EAA33013.3"/>
    <property type="molecule type" value="Genomic_DNA"/>
</dbReference>
<dbReference type="RefSeq" id="XP_962249.3">
    <property type="nucleotide sequence ID" value="XM_957156.3"/>
</dbReference>
<dbReference type="PDB" id="6YW5">
    <property type="method" value="EM"/>
    <property type="resolution" value="2.85 A"/>
    <property type="chains" value="LL=1-174"/>
</dbReference>
<dbReference type="PDB" id="6YWX">
    <property type="method" value="EM"/>
    <property type="resolution" value="3.10 A"/>
    <property type="chains" value="LL=1-174"/>
</dbReference>
<dbReference type="PDBsum" id="6YW5"/>
<dbReference type="PDBsum" id="6YWX"/>
<dbReference type="EMDB" id="EMD-10958"/>
<dbReference type="EMDB" id="EMD-10978"/>
<dbReference type="SMR" id="Q7S9I4"/>
<dbReference type="FunCoup" id="Q7S9I4">
    <property type="interactions" value="337"/>
</dbReference>
<dbReference type="STRING" id="367110.Q7S9I4"/>
<dbReference type="PaxDb" id="5141-EFNCRP00000006297"/>
<dbReference type="EnsemblFungi" id="EAA33013">
    <property type="protein sequence ID" value="EAA33013"/>
    <property type="gene ID" value="NCU06542"/>
</dbReference>
<dbReference type="GeneID" id="3878407"/>
<dbReference type="KEGG" id="ncr:NCU06542"/>
<dbReference type="VEuPathDB" id="FungiDB:NCU06542"/>
<dbReference type="HOGENOM" id="CLU_104295_1_2_1"/>
<dbReference type="InParanoid" id="Q7S9I4"/>
<dbReference type="OrthoDB" id="361013at2759"/>
<dbReference type="Proteomes" id="UP000001805">
    <property type="component" value="Chromosome 4, Linkage Group IV"/>
</dbReference>
<dbReference type="GO" id="GO:0005763">
    <property type="term" value="C:mitochondrial small ribosomal subunit"/>
    <property type="evidence" value="ECO:0007669"/>
    <property type="project" value="EnsemblFungi"/>
</dbReference>
<dbReference type="GO" id="GO:0005840">
    <property type="term" value="C:ribosome"/>
    <property type="evidence" value="ECO:0000318"/>
    <property type="project" value="GO_Central"/>
</dbReference>
<dbReference type="GO" id="GO:0003735">
    <property type="term" value="F:structural constituent of ribosome"/>
    <property type="evidence" value="ECO:0000318"/>
    <property type="project" value="GO_Central"/>
</dbReference>
<dbReference type="GO" id="GO:0006412">
    <property type="term" value="P:translation"/>
    <property type="evidence" value="ECO:0000318"/>
    <property type="project" value="GO_Central"/>
</dbReference>
<dbReference type="CDD" id="cd03368">
    <property type="entry name" value="Ribosomal_S12"/>
    <property type="match status" value="1"/>
</dbReference>
<dbReference type="FunFam" id="2.40.50.140:FF:000099">
    <property type="entry name" value="Ribosomal protein S12, mitochondrial"/>
    <property type="match status" value="1"/>
</dbReference>
<dbReference type="Gene3D" id="2.40.50.140">
    <property type="entry name" value="Nucleic acid-binding proteins"/>
    <property type="match status" value="1"/>
</dbReference>
<dbReference type="InterPro" id="IPR012340">
    <property type="entry name" value="NA-bd_OB-fold"/>
</dbReference>
<dbReference type="InterPro" id="IPR006032">
    <property type="entry name" value="Ribosomal_uS12"/>
</dbReference>
<dbReference type="InterPro" id="IPR005679">
    <property type="entry name" value="Ribosomal_uS12_bac"/>
</dbReference>
<dbReference type="NCBIfam" id="TIGR00981">
    <property type="entry name" value="rpsL_bact"/>
    <property type="match status" value="1"/>
</dbReference>
<dbReference type="PANTHER" id="PTHR11652">
    <property type="entry name" value="30S RIBOSOMAL PROTEIN S12 FAMILY MEMBER"/>
    <property type="match status" value="1"/>
</dbReference>
<dbReference type="Pfam" id="PF00164">
    <property type="entry name" value="Ribosom_S12_S23"/>
    <property type="match status" value="1"/>
</dbReference>
<dbReference type="PRINTS" id="PR01034">
    <property type="entry name" value="RIBOSOMALS12"/>
</dbReference>
<dbReference type="SUPFAM" id="SSF50249">
    <property type="entry name" value="Nucleic acid-binding proteins"/>
    <property type="match status" value="1"/>
</dbReference>
<comment type="function">
    <text evidence="4">Component of the mitochondrial ribosome (mitoribosome), a dedicated translation machinery responsible for the synthesis of mitochondrial genome-encoded proteins, including at least some of the essential transmembrane subunits of the mitochondrial respiratory chain. The mitoribosomes are attached to the mitochondrial inner membrane and translation products are cotranslationally integrated into the membrane.</text>
</comment>
<comment type="subunit">
    <text evidence="1">Component of the mitochondrial small ribosomal subunit (mt-SSU). Mature N.crassa 74S mitochondrial ribosomes consist of a small (37S) and a large (54S) subunit. The 37S small subunit contains a 16S ribosomal RNA (16S mt-rRNA) and 32 different proteins. The 54S large subunit contains a 23S rRNA (23S mt-rRNA) and 42 different proteins. uS12m forms part of the decoding center of the mt-SSU.</text>
</comment>
<comment type="subcellular location">
    <subcellularLocation>
        <location evidence="1">Mitochondrion</location>
    </subcellularLocation>
</comment>
<comment type="similarity">
    <text evidence="3">Belongs to the universal ribosomal protein uS12 family.</text>
</comment>
<reference key="1">
    <citation type="journal article" date="2003" name="Nature">
        <title>The genome sequence of the filamentous fungus Neurospora crassa.</title>
        <authorList>
            <person name="Galagan J.E."/>
            <person name="Calvo S.E."/>
            <person name="Borkovich K.A."/>
            <person name="Selker E.U."/>
            <person name="Read N.D."/>
            <person name="Jaffe D.B."/>
            <person name="FitzHugh W."/>
            <person name="Ma L.-J."/>
            <person name="Smirnov S."/>
            <person name="Purcell S."/>
            <person name="Rehman B."/>
            <person name="Elkins T."/>
            <person name="Engels R."/>
            <person name="Wang S."/>
            <person name="Nielsen C.B."/>
            <person name="Butler J."/>
            <person name="Endrizzi M."/>
            <person name="Qui D."/>
            <person name="Ianakiev P."/>
            <person name="Bell-Pedersen D."/>
            <person name="Nelson M.A."/>
            <person name="Werner-Washburne M."/>
            <person name="Selitrennikoff C.P."/>
            <person name="Kinsey J.A."/>
            <person name="Braun E.L."/>
            <person name="Zelter A."/>
            <person name="Schulte U."/>
            <person name="Kothe G.O."/>
            <person name="Jedd G."/>
            <person name="Mewes H.-W."/>
            <person name="Staben C."/>
            <person name="Marcotte E."/>
            <person name="Greenberg D."/>
            <person name="Roy A."/>
            <person name="Foley K."/>
            <person name="Naylor J."/>
            <person name="Stange-Thomann N."/>
            <person name="Barrett R."/>
            <person name="Gnerre S."/>
            <person name="Kamal M."/>
            <person name="Kamvysselis M."/>
            <person name="Mauceli E.W."/>
            <person name="Bielke C."/>
            <person name="Rudd S."/>
            <person name="Frishman D."/>
            <person name="Krystofova S."/>
            <person name="Rasmussen C."/>
            <person name="Metzenberg R.L."/>
            <person name="Perkins D.D."/>
            <person name="Kroken S."/>
            <person name="Cogoni C."/>
            <person name="Macino G."/>
            <person name="Catcheside D.E.A."/>
            <person name="Li W."/>
            <person name="Pratt R.J."/>
            <person name="Osmani S.A."/>
            <person name="DeSouza C.P.C."/>
            <person name="Glass N.L."/>
            <person name="Orbach M.J."/>
            <person name="Berglund J.A."/>
            <person name="Voelker R."/>
            <person name="Yarden O."/>
            <person name="Plamann M."/>
            <person name="Seiler S."/>
            <person name="Dunlap J.C."/>
            <person name="Radford A."/>
            <person name="Aramayo R."/>
            <person name="Natvig D.O."/>
            <person name="Alex L.A."/>
            <person name="Mannhaupt G."/>
            <person name="Ebbole D.J."/>
            <person name="Freitag M."/>
            <person name="Paulsen I."/>
            <person name="Sachs M.S."/>
            <person name="Lander E.S."/>
            <person name="Nusbaum C."/>
            <person name="Birren B.W."/>
        </authorList>
    </citation>
    <scope>NUCLEOTIDE SEQUENCE [LARGE SCALE GENOMIC DNA]</scope>
    <source>
        <strain>ATCC 24698 / 74-OR23-1A / CBS 708.71 / DSM 1257 / FGSC 987</strain>
    </source>
</reference>
<reference evidence="5 6" key="2">
    <citation type="journal article" date="2020" name="Nat. Commun.">
        <title>Analysis of translating mitoribosome reveals functional characteristics of translation in mitochondria of fungi.</title>
        <authorList>
            <person name="Itoh Y."/>
            <person name="Naschberger A."/>
            <person name="Mortezaei N."/>
            <person name="Herrmann J.M."/>
            <person name="Amunts A."/>
        </authorList>
    </citation>
    <scope>STRUCTURE BY ELECTRON MICROSCOPY (2.85 ANGSTROMS)</scope>
</reference>
<keyword id="KW-0002">3D-structure</keyword>
<keyword id="KW-0496">Mitochondrion</keyword>
<keyword id="KW-1185">Reference proteome</keyword>
<keyword id="KW-0687">Ribonucleoprotein</keyword>
<keyword id="KW-0689">Ribosomal protein</keyword>
<protein>
    <recommendedName>
        <fullName evidence="2">Small ribosomal subunit protein uS12m</fullName>
    </recommendedName>
</protein>
<proteinExistence type="evidence at protein level"/>
<evidence type="ECO:0000269" key="1">
    <source>
    </source>
</evidence>
<evidence type="ECO:0000303" key="2">
    <source>
    </source>
</evidence>
<evidence type="ECO:0000305" key="3"/>
<evidence type="ECO:0000305" key="4">
    <source>
    </source>
</evidence>
<evidence type="ECO:0007744" key="5">
    <source>
        <dbReference type="PDB" id="6YW5"/>
    </source>
</evidence>
<evidence type="ECO:0007744" key="6">
    <source>
        <dbReference type="PDB" id="6YWX"/>
    </source>
</evidence>
<accession>Q7S9I4</accession>